<keyword id="KW-0025">Alternative splicing</keyword>
<keyword id="KW-0963">Cytoplasm</keyword>
<keyword id="KW-0378">Hydrolase</keyword>
<keyword id="KW-1017">Isopeptide bond</keyword>
<keyword id="KW-0449">Lipoprotein</keyword>
<keyword id="KW-0460">Magnesium</keyword>
<keyword id="KW-0464">Manganese</keyword>
<keyword id="KW-0472">Membrane</keyword>
<keyword id="KW-0479">Metal-binding</keyword>
<keyword id="KW-0519">Myristate</keyword>
<keyword id="KW-0597">Phosphoprotein</keyword>
<keyword id="KW-0904">Protein phosphatase</keyword>
<keyword id="KW-1185">Reference proteome</keyword>
<keyword id="KW-0832">Ubl conjugation</keyword>
<protein>
    <recommendedName>
        <fullName>Protein phosphatase 1B</fullName>
        <ecNumber>3.1.3.16</ecNumber>
    </recommendedName>
    <alternativeName>
        <fullName>Protein phosphatase 2C isoform beta</fullName>
        <shortName>PP2C-beta</shortName>
    </alternativeName>
</protein>
<sequence length="390" mass="42889">MGAFLDKPKTEKHNAHGAGNGLRYGLSSMQGWRVEMEDAHTAVVGIPHGLEDWSFFAVYDGHAGSRVANYCSTHLLEHITTNEDFRAADKSGFALEPSVENVKTGIRTGFLKIDEYMRNFSDLRNGMDRSGSTAVGVMISPTHIYFINCGDSRAVLCRNGQVCFSTQDHKPCNPMEKERIQNAGGSVMIQRVNGSLAVSRALGDYDYKCVDGKGPTEQLVSPEPEVYEILRAEEDEFVVLACDGIWDVMSNEELCEFVNSRLEVSDDLENVCNWVVDTCLHKGSRDNMSIVLVCFANAPKVSDEAVKRDLELDKHLESRVEEIMQKSGEEGMPDLAHVMRILSAENIPNLPPGGGLAGKRNVIEAVYSRLNPNKDNDGGAGDLEDSLVAL</sequence>
<organism>
    <name type="scientific">Rattus norvegicus</name>
    <name type="common">Rat</name>
    <dbReference type="NCBI Taxonomy" id="10116"/>
    <lineage>
        <taxon>Eukaryota</taxon>
        <taxon>Metazoa</taxon>
        <taxon>Chordata</taxon>
        <taxon>Craniata</taxon>
        <taxon>Vertebrata</taxon>
        <taxon>Euteleostomi</taxon>
        <taxon>Mammalia</taxon>
        <taxon>Eutheria</taxon>
        <taxon>Euarchontoglires</taxon>
        <taxon>Glires</taxon>
        <taxon>Rodentia</taxon>
        <taxon>Myomorpha</taxon>
        <taxon>Muroidea</taxon>
        <taxon>Muridae</taxon>
        <taxon>Murinae</taxon>
        <taxon>Rattus</taxon>
    </lineage>
</organism>
<feature type="initiator methionine" description="Removed" evidence="2">
    <location>
        <position position="1"/>
    </location>
</feature>
<feature type="chain" id="PRO_0000057748" description="Protein phosphatase 1B">
    <location>
        <begin position="2"/>
        <end position="390"/>
    </location>
</feature>
<feature type="domain" description="PPM-type phosphatase" evidence="4">
    <location>
        <begin position="23"/>
        <end position="295"/>
    </location>
</feature>
<feature type="region of interest" description="Disordered" evidence="5">
    <location>
        <begin position="1"/>
        <end position="20"/>
    </location>
</feature>
<feature type="region of interest" description="Disordered" evidence="5">
    <location>
        <begin position="371"/>
        <end position="390"/>
    </location>
</feature>
<feature type="compositionally biased region" description="Basic and acidic residues" evidence="5">
    <location>
        <begin position="1"/>
        <end position="14"/>
    </location>
</feature>
<feature type="binding site" evidence="1">
    <location>
        <position position="60"/>
    </location>
    <ligand>
        <name>Mn(2+)</name>
        <dbReference type="ChEBI" id="CHEBI:29035"/>
        <label>1</label>
    </ligand>
</feature>
<feature type="binding site" evidence="2">
    <location>
        <position position="60"/>
    </location>
    <ligand>
        <name>Mn(2+)</name>
        <dbReference type="ChEBI" id="CHEBI:29035"/>
        <label>2</label>
    </ligand>
</feature>
<feature type="binding site" evidence="1">
    <location>
        <position position="61"/>
    </location>
    <ligand>
        <name>Mn(2+)</name>
        <dbReference type="ChEBI" id="CHEBI:29035"/>
        <label>1</label>
    </ligand>
</feature>
<feature type="binding site" evidence="2">
    <location>
        <position position="243"/>
    </location>
    <ligand>
        <name>Mn(2+)</name>
        <dbReference type="ChEBI" id="CHEBI:29035"/>
        <label>2</label>
    </ligand>
</feature>
<feature type="binding site" evidence="2">
    <location>
        <position position="286"/>
    </location>
    <ligand>
        <name>Mn(2+)</name>
        <dbReference type="ChEBI" id="CHEBI:29035"/>
        <label>2</label>
    </ligand>
</feature>
<feature type="modified residue" description="Phosphoserine" evidence="2">
    <location>
        <position position="386"/>
    </location>
</feature>
<feature type="lipid moiety-binding region" description="N-myristoyl glycine" evidence="2">
    <location>
        <position position="2"/>
    </location>
</feature>
<feature type="cross-link" description="Glycyl lysine isopeptide (Lys-Gly) (interchain with G-Cter in ISG15)" evidence="1">
    <location>
        <position position="12"/>
    </location>
</feature>
<feature type="splice variant" id="VSP_005093" description="In isoform 2." evidence="6">
    <original>GAGDLEDSLVAL</original>
    <variation>FYQPSTPYSDNVSYYEWQT</variation>
    <location>
        <begin position="379"/>
        <end position="390"/>
    </location>
</feature>
<gene>
    <name type="primary">Ppm1b</name>
    <name type="synonym">Pp2c2</name>
    <name type="synonym">Pppm1b</name>
</gene>
<name>PPM1B_RAT</name>
<evidence type="ECO:0000250" key="1"/>
<evidence type="ECO:0000250" key="2">
    <source>
        <dbReference type="UniProtKB" id="O75688"/>
    </source>
</evidence>
<evidence type="ECO:0000250" key="3">
    <source>
        <dbReference type="UniProtKB" id="P36993"/>
    </source>
</evidence>
<evidence type="ECO:0000255" key="4">
    <source>
        <dbReference type="PROSITE-ProRule" id="PRU01082"/>
    </source>
</evidence>
<evidence type="ECO:0000256" key="5">
    <source>
        <dbReference type="SAM" id="MobiDB-lite"/>
    </source>
</evidence>
<evidence type="ECO:0000303" key="6">
    <source>
    </source>
</evidence>
<evidence type="ECO:0000305" key="7"/>
<accession>P35815</accession>
<accession>Q546R0</accession>
<accession>Q64046</accession>
<comment type="function">
    <text evidence="1">Enzyme with a broad specificity. Dephosphorylates PRKAA1 and PRKAA2. Inhibits TBK1-mediated antiviral signaling by dephosphorylating it at 'Ser-172'. Plays an important role in the termination of TNF-alpha-mediated NF-kappa-B activation through dephosphorylating and inactivating IKBKB/IKKB (By similarity).</text>
</comment>
<comment type="catalytic activity">
    <reaction>
        <text>O-phospho-L-seryl-[protein] + H2O = L-seryl-[protein] + phosphate</text>
        <dbReference type="Rhea" id="RHEA:20629"/>
        <dbReference type="Rhea" id="RHEA-COMP:9863"/>
        <dbReference type="Rhea" id="RHEA-COMP:11604"/>
        <dbReference type="ChEBI" id="CHEBI:15377"/>
        <dbReference type="ChEBI" id="CHEBI:29999"/>
        <dbReference type="ChEBI" id="CHEBI:43474"/>
        <dbReference type="ChEBI" id="CHEBI:83421"/>
        <dbReference type="EC" id="3.1.3.16"/>
    </reaction>
</comment>
<comment type="catalytic activity">
    <reaction>
        <text>O-phospho-L-threonyl-[protein] + H2O = L-threonyl-[protein] + phosphate</text>
        <dbReference type="Rhea" id="RHEA:47004"/>
        <dbReference type="Rhea" id="RHEA-COMP:11060"/>
        <dbReference type="Rhea" id="RHEA-COMP:11605"/>
        <dbReference type="ChEBI" id="CHEBI:15377"/>
        <dbReference type="ChEBI" id="CHEBI:30013"/>
        <dbReference type="ChEBI" id="CHEBI:43474"/>
        <dbReference type="ChEBI" id="CHEBI:61977"/>
        <dbReference type="EC" id="3.1.3.16"/>
    </reaction>
</comment>
<comment type="cofactor">
    <cofactor evidence="1">
        <name>Mg(2+)</name>
        <dbReference type="ChEBI" id="CHEBI:18420"/>
    </cofactor>
    <cofactor evidence="1">
        <name>Mn(2+)</name>
        <dbReference type="ChEBI" id="CHEBI:29035"/>
    </cofactor>
    <text evidence="1">Binds 2 magnesium or manganese ions per subunit.</text>
</comment>
<comment type="subunit">
    <text evidence="1">Monomer. Interacts with PAK6. Interacts with the phosphorylated form of IKBKB/IKKB.</text>
</comment>
<comment type="subcellular location">
    <subcellularLocation>
        <location evidence="3">Cytoplasm</location>
        <location evidence="3">Cytosol</location>
    </subcellularLocation>
    <subcellularLocation>
        <location evidence="3">Membrane</location>
        <topology evidence="3">Lipid-anchor</topology>
    </subcellularLocation>
    <text evidence="3">Weakly associates at the membrane and N-myristoylation mediates the membrane localization.</text>
</comment>
<comment type="alternative products">
    <event type="alternative splicing"/>
    <isoform>
        <id>P35815-1</id>
        <name>1</name>
        <name>Beta-1</name>
        <sequence type="displayed"/>
    </isoform>
    <isoform>
        <id>P35815-2</id>
        <name>2</name>
        <name>Beta-MPP</name>
        <sequence type="described" ref="VSP_005093"/>
    </isoform>
    <text>Additional isoforms seem to exist. Isoforms appear to differ in their C-terminus.</text>
</comment>
<comment type="PTM">
    <text evidence="1">Isgylation negatively regulates its activity.</text>
</comment>
<comment type="PTM">
    <text evidence="1">N-myristoylation is essential for the recognition of its substrates for dephosphorylation.</text>
</comment>
<comment type="similarity">
    <text evidence="7">Belongs to the PP2C family.</text>
</comment>
<proteinExistence type="evidence at transcript level"/>
<reference key="1">
    <citation type="journal article" date="1992" name="FEBS Lett.">
        <title>Molecular cloning and primary structure of a protein phosphatase 2C isoform.</title>
        <authorList>
            <person name="Wenk J."/>
            <person name="Trompeter H.-I."/>
            <person name="Pettrich K.-G."/>
            <person name="Cohen P.T.W."/>
            <person name="Campbell D.G."/>
            <person name="Mieskes G."/>
        </authorList>
    </citation>
    <scope>NUCLEOTIDE SEQUENCE [MRNA] (ISOFORM 1)</scope>
    <source>
        <tissue>Liver</tissue>
    </source>
</reference>
<reference key="2">
    <citation type="journal article" date="1995" name="Biochem. Biophys. Res. Commun.">
        <title>Monoclonal anti-FLAG antibodies react with a new isoform of rat Mg2+ dependent protein phosphatase beta.</title>
        <authorList>
            <person name="Schafer K."/>
            <person name="Braun T."/>
        </authorList>
    </citation>
    <scope>NUCLEOTIDE SEQUENCE [MRNA] (ISOFORM 2)</scope>
    <source>
        <tissue>Brain</tissue>
    </source>
</reference>
<reference key="3">
    <citation type="submission" date="2000-02" db="EMBL/GenBank/DDBJ databases">
        <title>Protein phosphatase 1B. Cloning and characterization of two major transcripts generated by alternative use of 3' exons.</title>
        <authorList>
            <person name="Seroussi E."/>
            <person name="Shani N."/>
            <person name="Hayut A."/>
            <person name="Faier S."/>
            <person name="Ben-Meir D."/>
            <person name="Divinski I."/>
            <person name="Smorodinsky N.I."/>
            <person name="Lavi S."/>
        </authorList>
    </citation>
    <scope>NUCLEOTIDE SEQUENCE [MRNA] (ISOFORM 1)</scope>
</reference>
<dbReference type="EC" id="3.1.3.16"/>
<dbReference type="EMBL" id="S90449">
    <property type="protein sequence ID" value="AAB21898.1"/>
    <property type="molecule type" value="mRNA"/>
</dbReference>
<dbReference type="EMBL" id="S74572">
    <property type="protein sequence ID" value="AAB33430.1"/>
    <property type="molecule type" value="mRNA"/>
</dbReference>
<dbReference type="EMBL" id="AJ271837">
    <property type="protein sequence ID" value="CAC28067.1"/>
    <property type="molecule type" value="mRNA"/>
</dbReference>
<dbReference type="PIR" id="JC2524">
    <property type="entry name" value="JC2524"/>
</dbReference>
<dbReference type="PIR" id="S20392">
    <property type="entry name" value="S20392"/>
</dbReference>
<dbReference type="RefSeq" id="NP_149087.1">
    <molecule id="P35815-1"/>
    <property type="nucleotide sequence ID" value="NM_033096.3"/>
</dbReference>
<dbReference type="SMR" id="P35815"/>
<dbReference type="BioGRID" id="246799">
    <property type="interactions" value="1"/>
</dbReference>
<dbReference type="FunCoup" id="P35815">
    <property type="interactions" value="4232"/>
</dbReference>
<dbReference type="STRING" id="10116.ENSRNOP00000074301"/>
<dbReference type="iPTMnet" id="P35815"/>
<dbReference type="PhosphoSitePlus" id="P35815"/>
<dbReference type="jPOST" id="P35815"/>
<dbReference type="PaxDb" id="10116-ENSRNOP00000041472"/>
<dbReference type="GeneID" id="24667"/>
<dbReference type="KEGG" id="rno:24667"/>
<dbReference type="UCSC" id="RGD:3374">
    <molecule id="P35815-1"/>
    <property type="organism name" value="rat"/>
</dbReference>
<dbReference type="AGR" id="RGD:3374"/>
<dbReference type="CTD" id="5495"/>
<dbReference type="RGD" id="3374">
    <property type="gene designation" value="Ppm1b"/>
</dbReference>
<dbReference type="eggNOG" id="KOG0697">
    <property type="taxonomic scope" value="Eukaryota"/>
</dbReference>
<dbReference type="HOGENOM" id="CLU_013173_4_0_1"/>
<dbReference type="InParanoid" id="P35815"/>
<dbReference type="Reactome" id="R-RNO-1169408">
    <property type="pathway name" value="ISG15 antiviral mechanism"/>
</dbReference>
<dbReference type="PRO" id="PR:P35815"/>
<dbReference type="Proteomes" id="UP000002494">
    <property type="component" value="Chromosome 6"/>
</dbReference>
<dbReference type="Bgee" id="ENSRNOG00000030667">
    <property type="expression patterns" value="Expressed in skeletal muscle tissue and 20 other cell types or tissues"/>
</dbReference>
<dbReference type="ExpressionAtlas" id="P35815">
    <property type="expression patterns" value="baseline and differential"/>
</dbReference>
<dbReference type="GO" id="GO:0005829">
    <property type="term" value="C:cytosol"/>
    <property type="evidence" value="ECO:0000250"/>
    <property type="project" value="UniProtKB"/>
</dbReference>
<dbReference type="GO" id="GO:0016020">
    <property type="term" value="C:membrane"/>
    <property type="evidence" value="ECO:0000250"/>
    <property type="project" value="UniProtKB"/>
</dbReference>
<dbReference type="GO" id="GO:0005634">
    <property type="term" value="C:nucleus"/>
    <property type="evidence" value="ECO:0000318"/>
    <property type="project" value="GO_Central"/>
</dbReference>
<dbReference type="GO" id="GO:0000287">
    <property type="term" value="F:magnesium ion binding"/>
    <property type="evidence" value="ECO:0007669"/>
    <property type="project" value="InterPro"/>
</dbReference>
<dbReference type="GO" id="GO:0030145">
    <property type="term" value="F:manganese ion binding"/>
    <property type="evidence" value="ECO:0007669"/>
    <property type="project" value="InterPro"/>
</dbReference>
<dbReference type="GO" id="GO:0004722">
    <property type="term" value="F:protein serine/threonine phosphatase activity"/>
    <property type="evidence" value="ECO:0000266"/>
    <property type="project" value="RGD"/>
</dbReference>
<dbReference type="GO" id="GO:0006499">
    <property type="term" value="P:N-terminal protein myristoylation"/>
    <property type="evidence" value="ECO:0000250"/>
    <property type="project" value="UniProtKB"/>
</dbReference>
<dbReference type="GO" id="GO:0043124">
    <property type="term" value="P:negative regulation of canonical NF-kappaB signal transduction"/>
    <property type="evidence" value="ECO:0000250"/>
    <property type="project" value="UniProtKB"/>
</dbReference>
<dbReference type="GO" id="GO:0050687">
    <property type="term" value="P:negative regulation of defense response to virus"/>
    <property type="evidence" value="ECO:0000250"/>
    <property type="project" value="UniProtKB"/>
</dbReference>
<dbReference type="GO" id="GO:0032688">
    <property type="term" value="P:negative regulation of interferon-beta production"/>
    <property type="evidence" value="ECO:0000250"/>
    <property type="project" value="UniProtKB"/>
</dbReference>
<dbReference type="GO" id="GO:1901223">
    <property type="term" value="P:negative regulation of non-canonical NF-kappaB signal transduction"/>
    <property type="evidence" value="ECO:0000250"/>
    <property type="project" value="UniProtKB"/>
</dbReference>
<dbReference type="GO" id="GO:0090263">
    <property type="term" value="P:positive regulation of canonical Wnt signaling pathway"/>
    <property type="evidence" value="ECO:0000318"/>
    <property type="project" value="GO_Central"/>
</dbReference>
<dbReference type="GO" id="GO:0006470">
    <property type="term" value="P:protein dephosphorylation"/>
    <property type="evidence" value="ECO:0000250"/>
    <property type="project" value="UniProtKB"/>
</dbReference>
<dbReference type="GO" id="GO:0043122">
    <property type="term" value="P:regulation of canonical NF-kappaB signal transduction"/>
    <property type="evidence" value="ECO:0000318"/>
    <property type="project" value="GO_Central"/>
</dbReference>
<dbReference type="CDD" id="cd00143">
    <property type="entry name" value="PP2Cc"/>
    <property type="match status" value="1"/>
</dbReference>
<dbReference type="FunFam" id="1.10.10.430:FF:000001">
    <property type="entry name" value="protein phosphatase 1B isoform X1"/>
    <property type="match status" value="1"/>
</dbReference>
<dbReference type="FunFam" id="3.60.40.10:FF:000001">
    <property type="entry name" value="protein phosphatase 1B isoform X1"/>
    <property type="match status" value="1"/>
</dbReference>
<dbReference type="Gene3D" id="1.10.10.430">
    <property type="entry name" value="Phosphatase 2C, C-terminal domain suprefamily"/>
    <property type="match status" value="1"/>
</dbReference>
<dbReference type="Gene3D" id="3.60.40.10">
    <property type="entry name" value="PPM-type phosphatase domain"/>
    <property type="match status" value="1"/>
</dbReference>
<dbReference type="InterPro" id="IPR015655">
    <property type="entry name" value="PP2C"/>
</dbReference>
<dbReference type="InterPro" id="IPR000222">
    <property type="entry name" value="PP2C_BS"/>
</dbReference>
<dbReference type="InterPro" id="IPR012911">
    <property type="entry name" value="PP2C_C"/>
</dbReference>
<dbReference type="InterPro" id="IPR036580">
    <property type="entry name" value="PP2C_C_sf"/>
</dbReference>
<dbReference type="InterPro" id="IPR036457">
    <property type="entry name" value="PPM-type-like_dom_sf"/>
</dbReference>
<dbReference type="InterPro" id="IPR001932">
    <property type="entry name" value="PPM-type_phosphatase-like_dom"/>
</dbReference>
<dbReference type="PANTHER" id="PTHR47992">
    <property type="entry name" value="PROTEIN PHOSPHATASE"/>
    <property type="match status" value="1"/>
</dbReference>
<dbReference type="Pfam" id="PF00481">
    <property type="entry name" value="PP2C"/>
    <property type="match status" value="1"/>
</dbReference>
<dbReference type="Pfam" id="PF07830">
    <property type="entry name" value="PP2C_C"/>
    <property type="match status" value="1"/>
</dbReference>
<dbReference type="SMART" id="SM00332">
    <property type="entry name" value="PP2Cc"/>
    <property type="match status" value="1"/>
</dbReference>
<dbReference type="SUPFAM" id="SSF81606">
    <property type="entry name" value="PP2C-like"/>
    <property type="match status" value="1"/>
</dbReference>
<dbReference type="SUPFAM" id="SSF81601">
    <property type="entry name" value="Protein serine/threonine phosphatase 2C, C-terminal domain"/>
    <property type="match status" value="1"/>
</dbReference>
<dbReference type="PROSITE" id="PS01032">
    <property type="entry name" value="PPM_1"/>
    <property type="match status" value="1"/>
</dbReference>
<dbReference type="PROSITE" id="PS51746">
    <property type="entry name" value="PPM_2"/>
    <property type="match status" value="1"/>
</dbReference>